<protein>
    <recommendedName>
        <fullName>Sensor histidine kinase MtrB</fullName>
        <ecNumber>2.7.13.3</ecNumber>
    </recommendedName>
</protein>
<accession>P9WGK9</accession>
<accession>L0TF19</accession>
<accession>O05890</accession>
<accession>Q50496</accession>
<dbReference type="EC" id="2.7.13.3"/>
<dbReference type="EMBL" id="U14909">
    <property type="protein sequence ID" value="AAB07807.1"/>
    <property type="molecule type" value="Genomic_DNA"/>
</dbReference>
<dbReference type="EMBL" id="AL123456">
    <property type="protein sequence ID" value="CCP46064.1"/>
    <property type="molecule type" value="Genomic_DNA"/>
</dbReference>
<dbReference type="PIR" id="G70592">
    <property type="entry name" value="G70592"/>
</dbReference>
<dbReference type="RefSeq" id="NP_217762.1">
    <property type="nucleotide sequence ID" value="NC_000962.3"/>
</dbReference>
<dbReference type="RefSeq" id="WP_003917137.1">
    <property type="nucleotide sequence ID" value="NZ_NVQJ01000003.1"/>
</dbReference>
<dbReference type="SMR" id="P9WGK9"/>
<dbReference type="FunCoup" id="P9WGK9">
    <property type="interactions" value="59"/>
</dbReference>
<dbReference type="STRING" id="83332.Rv3245c"/>
<dbReference type="PaxDb" id="83332-Rv3245c"/>
<dbReference type="DNASU" id="888719"/>
<dbReference type="GeneID" id="888719"/>
<dbReference type="KEGG" id="mtu:Rv3245c"/>
<dbReference type="KEGG" id="mtv:RVBD_3245c"/>
<dbReference type="TubercuList" id="Rv3245c"/>
<dbReference type="eggNOG" id="COG5000">
    <property type="taxonomic scope" value="Bacteria"/>
</dbReference>
<dbReference type="eggNOG" id="COG5002">
    <property type="taxonomic scope" value="Bacteria"/>
</dbReference>
<dbReference type="InParanoid" id="P9WGK9"/>
<dbReference type="OrthoDB" id="9786919at2"/>
<dbReference type="PhylomeDB" id="P9WGK9"/>
<dbReference type="BRENDA" id="2.7.13.3">
    <property type="organism ID" value="3445"/>
</dbReference>
<dbReference type="Proteomes" id="UP000001584">
    <property type="component" value="Chromosome"/>
</dbReference>
<dbReference type="GO" id="GO:0005829">
    <property type="term" value="C:cytosol"/>
    <property type="evidence" value="ECO:0007005"/>
    <property type="project" value="MTBBASE"/>
</dbReference>
<dbReference type="GO" id="GO:0005886">
    <property type="term" value="C:plasma membrane"/>
    <property type="evidence" value="ECO:0007669"/>
    <property type="project" value="UniProtKB-SubCell"/>
</dbReference>
<dbReference type="GO" id="GO:0005524">
    <property type="term" value="F:ATP binding"/>
    <property type="evidence" value="ECO:0007669"/>
    <property type="project" value="UniProtKB-KW"/>
</dbReference>
<dbReference type="GO" id="GO:0000155">
    <property type="term" value="F:phosphorelay sensor kinase activity"/>
    <property type="evidence" value="ECO:0000318"/>
    <property type="project" value="GO_Central"/>
</dbReference>
<dbReference type="CDD" id="cd06225">
    <property type="entry name" value="HAMP"/>
    <property type="match status" value="1"/>
</dbReference>
<dbReference type="CDD" id="cd00075">
    <property type="entry name" value="HATPase"/>
    <property type="match status" value="1"/>
</dbReference>
<dbReference type="CDD" id="cd00082">
    <property type="entry name" value="HisKA"/>
    <property type="match status" value="1"/>
</dbReference>
<dbReference type="FunFam" id="1.10.287.130:FF:000010">
    <property type="entry name" value="Two-component sensor histidine kinase"/>
    <property type="match status" value="1"/>
</dbReference>
<dbReference type="FunFam" id="3.30.565.10:FF:000013">
    <property type="entry name" value="Two-component sensor histidine kinase"/>
    <property type="match status" value="1"/>
</dbReference>
<dbReference type="Gene3D" id="1.10.287.130">
    <property type="match status" value="1"/>
</dbReference>
<dbReference type="Gene3D" id="6.10.340.10">
    <property type="match status" value="1"/>
</dbReference>
<dbReference type="Gene3D" id="3.30.565.10">
    <property type="entry name" value="Histidine kinase-like ATPase, C-terminal domain"/>
    <property type="match status" value="1"/>
</dbReference>
<dbReference type="InterPro" id="IPR003660">
    <property type="entry name" value="HAMP_dom"/>
</dbReference>
<dbReference type="InterPro" id="IPR036890">
    <property type="entry name" value="HATPase_C_sf"/>
</dbReference>
<dbReference type="InterPro" id="IPR005467">
    <property type="entry name" value="His_kinase_dom"/>
</dbReference>
<dbReference type="InterPro" id="IPR003661">
    <property type="entry name" value="HisK_dim/P_dom"/>
</dbReference>
<dbReference type="InterPro" id="IPR036097">
    <property type="entry name" value="HisK_dim/P_sf"/>
</dbReference>
<dbReference type="InterPro" id="IPR047669">
    <property type="entry name" value="MtrAB_MtrB"/>
</dbReference>
<dbReference type="InterPro" id="IPR004358">
    <property type="entry name" value="Sig_transdc_His_kin-like_C"/>
</dbReference>
<dbReference type="NCBIfam" id="NF040691">
    <property type="entry name" value="MtrAB_MtrB"/>
    <property type="match status" value="1"/>
</dbReference>
<dbReference type="PANTHER" id="PTHR43547:SF2">
    <property type="entry name" value="HYBRID SIGNAL TRANSDUCTION HISTIDINE KINASE C"/>
    <property type="match status" value="1"/>
</dbReference>
<dbReference type="PANTHER" id="PTHR43547">
    <property type="entry name" value="TWO-COMPONENT HISTIDINE KINASE"/>
    <property type="match status" value="1"/>
</dbReference>
<dbReference type="Pfam" id="PF00672">
    <property type="entry name" value="HAMP"/>
    <property type="match status" value="1"/>
</dbReference>
<dbReference type="Pfam" id="PF02518">
    <property type="entry name" value="HATPase_c"/>
    <property type="match status" value="1"/>
</dbReference>
<dbReference type="Pfam" id="PF00512">
    <property type="entry name" value="HisKA"/>
    <property type="match status" value="1"/>
</dbReference>
<dbReference type="PRINTS" id="PR00344">
    <property type="entry name" value="BCTRLSENSOR"/>
</dbReference>
<dbReference type="SMART" id="SM00304">
    <property type="entry name" value="HAMP"/>
    <property type="match status" value="1"/>
</dbReference>
<dbReference type="SMART" id="SM00387">
    <property type="entry name" value="HATPase_c"/>
    <property type="match status" value="1"/>
</dbReference>
<dbReference type="SMART" id="SM00388">
    <property type="entry name" value="HisKA"/>
    <property type="match status" value="1"/>
</dbReference>
<dbReference type="SUPFAM" id="SSF55874">
    <property type="entry name" value="ATPase domain of HSP90 chaperone/DNA topoisomerase II/histidine kinase"/>
    <property type="match status" value="1"/>
</dbReference>
<dbReference type="SUPFAM" id="SSF158472">
    <property type="entry name" value="HAMP domain-like"/>
    <property type="match status" value="1"/>
</dbReference>
<dbReference type="SUPFAM" id="SSF47384">
    <property type="entry name" value="Homodimeric domain of signal transducing histidine kinase"/>
    <property type="match status" value="1"/>
</dbReference>
<dbReference type="PROSITE" id="PS50885">
    <property type="entry name" value="HAMP"/>
    <property type="match status" value="1"/>
</dbReference>
<dbReference type="PROSITE" id="PS50109">
    <property type="entry name" value="HIS_KIN"/>
    <property type="match status" value="1"/>
</dbReference>
<organism>
    <name type="scientific">Mycobacterium tuberculosis (strain ATCC 25618 / H37Rv)</name>
    <dbReference type="NCBI Taxonomy" id="83332"/>
    <lineage>
        <taxon>Bacteria</taxon>
        <taxon>Bacillati</taxon>
        <taxon>Actinomycetota</taxon>
        <taxon>Actinomycetes</taxon>
        <taxon>Mycobacteriales</taxon>
        <taxon>Mycobacteriaceae</taxon>
        <taxon>Mycobacterium</taxon>
        <taxon>Mycobacterium tuberculosis complex</taxon>
    </lineage>
</organism>
<keyword id="KW-0067">ATP-binding</keyword>
<keyword id="KW-1003">Cell membrane</keyword>
<keyword id="KW-0418">Kinase</keyword>
<keyword id="KW-0472">Membrane</keyword>
<keyword id="KW-0547">Nucleotide-binding</keyword>
<keyword id="KW-0597">Phosphoprotein</keyword>
<keyword id="KW-1185">Reference proteome</keyword>
<keyword id="KW-0808">Transferase</keyword>
<keyword id="KW-0812">Transmembrane</keyword>
<keyword id="KW-1133">Transmembrane helix</keyword>
<keyword id="KW-0902">Two-component regulatory system</keyword>
<evidence type="ECO:0000255" key="1"/>
<evidence type="ECO:0000255" key="2">
    <source>
        <dbReference type="PROSITE-ProRule" id="PRU00102"/>
    </source>
</evidence>
<evidence type="ECO:0000255" key="3">
    <source>
        <dbReference type="PROSITE-ProRule" id="PRU00107"/>
    </source>
</evidence>
<evidence type="ECO:0000256" key="4">
    <source>
        <dbReference type="SAM" id="MobiDB-lite"/>
    </source>
</evidence>
<evidence type="ECO:0000269" key="5">
    <source>
    </source>
</evidence>
<evidence type="ECO:0000269" key="6">
    <source>
    </source>
</evidence>
<evidence type="ECO:0000269" key="7">
    <source>
    </source>
</evidence>
<evidence type="ECO:0000269" key="8">
    <source>
    </source>
</evidence>
<evidence type="ECO:0000305" key="9"/>
<name>MTRB_MYCTU</name>
<reference key="1">
    <citation type="journal article" date="1996" name="J. Bacteriol.">
        <title>Elements of signal transduction in Mycobacterium tuberculosis: in vitro phosphorylation and in vivo expression of the response regulator MtrA.</title>
        <authorList>
            <person name="Via L.E."/>
            <person name="Curcic R."/>
            <person name="Mudd M.H."/>
            <person name="Dhandayuthapani S."/>
            <person name="Ulmer R.J."/>
            <person name="Deretic V."/>
        </authorList>
    </citation>
    <scope>NUCLEOTIDE SEQUENCE [GENOMIC DNA]</scope>
    <source>
        <strain>ATCC 25618 / H37Rv</strain>
    </source>
</reference>
<reference key="2">
    <citation type="journal article" date="1998" name="Nature">
        <title>Deciphering the biology of Mycobacterium tuberculosis from the complete genome sequence.</title>
        <authorList>
            <person name="Cole S.T."/>
            <person name="Brosch R."/>
            <person name="Parkhill J."/>
            <person name="Garnier T."/>
            <person name="Churcher C.M."/>
            <person name="Harris D.E."/>
            <person name="Gordon S.V."/>
            <person name="Eiglmeier K."/>
            <person name="Gas S."/>
            <person name="Barry C.E. III"/>
            <person name="Tekaia F."/>
            <person name="Badcock K."/>
            <person name="Basham D."/>
            <person name="Brown D."/>
            <person name="Chillingworth T."/>
            <person name="Connor R."/>
            <person name="Davies R.M."/>
            <person name="Devlin K."/>
            <person name="Feltwell T."/>
            <person name="Gentles S."/>
            <person name="Hamlin N."/>
            <person name="Holroyd S."/>
            <person name="Hornsby T."/>
            <person name="Jagels K."/>
            <person name="Krogh A."/>
            <person name="McLean J."/>
            <person name="Moule S."/>
            <person name="Murphy L.D."/>
            <person name="Oliver S."/>
            <person name="Osborne J."/>
            <person name="Quail M.A."/>
            <person name="Rajandream M.A."/>
            <person name="Rogers J."/>
            <person name="Rutter S."/>
            <person name="Seeger K."/>
            <person name="Skelton S."/>
            <person name="Squares S."/>
            <person name="Squares R."/>
            <person name="Sulston J.E."/>
            <person name="Taylor K."/>
            <person name="Whitehead S."/>
            <person name="Barrell B.G."/>
        </authorList>
    </citation>
    <scope>NUCLEOTIDE SEQUENCE [LARGE SCALE GENOMIC DNA]</scope>
    <source>
        <strain>ATCC 25618 / H37Rv</strain>
    </source>
</reference>
<reference key="3">
    <citation type="journal article" date="2000" name="J. Bacteriol.">
        <title>An essential two-component signal transduction system in Mycobacterium tuberculosis.</title>
        <authorList>
            <person name="Zahrt T.C."/>
            <person name="Deretic V."/>
        </authorList>
    </citation>
    <scope>DISRUPTION PHENOTYPE</scope>
    <source>
        <strain>ATCC 25618 / H37Rv</strain>
    </source>
</reference>
<reference key="4">
    <citation type="journal article" date="2006" name="Mol. Microbiol.">
        <title>Modulation of Mycobacterium tuberculosis proliferation by MtrA, an essential two-component response regulator.</title>
        <authorList>
            <person name="Fol M."/>
            <person name="Chauhan A."/>
            <person name="Nair N.K."/>
            <person name="Maloney E."/>
            <person name="Moomey M."/>
            <person name="Jagannath C."/>
            <person name="Madiraju M.V."/>
            <person name="Rajagopalan M."/>
        </authorList>
    </citation>
    <scope>CHARACTERIZATION</scope>
    <source>
        <strain>ATCC 25618 / H37Rv</strain>
    </source>
</reference>
<reference key="5">
    <citation type="journal article" date="2008" name="BMC Syst. Biol.">
        <title>targetTB: a target identification pipeline for Mycobacterium tuberculosis through an interactome, reactome and genome-scale structural analysis.</title>
        <authorList>
            <person name="Raman K."/>
            <person name="Yeturu K."/>
            <person name="Chandra N."/>
        </authorList>
    </citation>
    <scope>IDENTIFICATION AS A DRUG TARGET [LARGE SCALE ANALYSIS]</scope>
</reference>
<reference key="6">
    <citation type="journal article" date="2010" name="Mol. Microbiol.">
        <title>A lipoprotein modulates activity of the MtrAB two-component system to provide intrinsic multidrug resistance, cytokinetic control and cell wall homeostasis in Mycobacterium.</title>
        <authorList>
            <person name="Nguyen H.T."/>
            <person name="Wolff K.A."/>
            <person name="Cartabuke R.H."/>
            <person name="Ogwang S."/>
            <person name="Nguyen L."/>
        </authorList>
    </citation>
    <scope>SUBCELLULAR LOCATION</scope>
    <scope>INTERACTION WITH LPQB</scope>
    <source>
        <strain>ATCC 25618 / H37Rv</strain>
    </source>
</reference>
<reference key="7">
    <citation type="journal article" date="2011" name="Mol. Cell. Proteomics">
        <title>Proteogenomic analysis of Mycobacterium tuberculosis by high resolution mass spectrometry.</title>
        <authorList>
            <person name="Kelkar D.S."/>
            <person name="Kumar D."/>
            <person name="Kumar P."/>
            <person name="Balakrishnan L."/>
            <person name="Muthusamy B."/>
            <person name="Yadav A.K."/>
            <person name="Shrivastava P."/>
            <person name="Marimuthu A."/>
            <person name="Anand S."/>
            <person name="Sundaram H."/>
            <person name="Kingsbury R."/>
            <person name="Harsha H.C."/>
            <person name="Nair B."/>
            <person name="Prasad T.S."/>
            <person name="Chauhan D.S."/>
            <person name="Katoch K."/>
            <person name="Katoch V.M."/>
            <person name="Kumar P."/>
            <person name="Chaerkady R."/>
            <person name="Ramachandran S."/>
            <person name="Dash D."/>
            <person name="Pandey A."/>
        </authorList>
    </citation>
    <scope>IDENTIFICATION BY MASS SPECTROMETRY [LARGE SCALE ANALYSIS]</scope>
    <source>
        <strain>ATCC 25618 / H37Rv</strain>
    </source>
</reference>
<reference key="8">
    <citation type="journal article" date="2011" name="Plasmid">
        <title>Mycobacterium tuberculosis mtrA merodiploid strains with point mutations in the signal-receiving domain of MtrA exhibit growth defects in nutrient broth.</title>
        <authorList>
            <person name="Al Zayer M."/>
            <person name="Stankowska D."/>
            <person name="Dziedzic R."/>
            <person name="Sarva K."/>
            <person name="Madiraju M.V."/>
            <person name="Rajagopalan M."/>
        </authorList>
    </citation>
    <scope>FUNCTION</scope>
    <scope>INTERACTION WITH MTRA</scope>
    <scope>AUTOPHOSPHORYLATION</scope>
    <scope>COFACTOR</scope>
    <scope>ACTIVITY REGULATION</scope>
    <source>
        <strain>ATCC 25618 / H37Rv</strain>
    </source>
</reference>
<reference key="9">
    <citation type="journal article" date="2012" name="J. Biol. Chem.">
        <title>Septal localization of the Mycobacterium tuberculosis MtrB sensor kinase promotes MtrA regulon expression.</title>
        <authorList>
            <person name="Plocinska R."/>
            <person name="Purushotham G."/>
            <person name="Sarva K."/>
            <person name="Vadrevu I.S."/>
            <person name="Pandeeti E.V."/>
            <person name="Arora N."/>
            <person name="Plocinski P."/>
            <person name="Madiraju M.V."/>
            <person name="Rajagopalan M."/>
        </authorList>
    </citation>
    <scope>FUNCTION</scope>
    <scope>AUTOPHOSPHORYLATION</scope>
    <scope>SUBCELLULAR LOCATION</scope>
    <scope>MUTAGENESIS OF HIS-305</scope>
    <source>
        <strain>ATCC 25618 / H37Rv</strain>
    </source>
</reference>
<sequence length="567" mass="61637">MIFGSRRRIRGRRGRSGPMTRGLSALSRAVAVAWRRSLQLRVVALTLGLSLAVILALGFVLTSQVTNRVLDIKVRAAIDQIERARTTVSGIVNGEETRSLDSSLQLARNTLTSKTDPASGAGLAGAFDAVLMVPGDGPRAASTAGPVDQVPNALRGFVKAGQAAYQYATVQTEGFSGPALIIGTPTLSRVANLELYLIFPLASEQATITLVRGTMATGGLVLLVLLAGIALLVSRQVVVPVRSASRIAERFAEGHLSERMPVRGEDDMARLAVSFNDMAESLSRQIAQLEEFGNLQRRFTSDVSHELRTPLTTVRMAADLIYDHSADLDPTLRRSTELMVSELDRFETLLNDLLEISRHDAGVAELSVEAVDLRTTVNNALGNVGHLAEEAGIELLVDLPAEQVIAEVDARRVERILRNLIANAIDHAEHKPVRIRMAADEDTVAVTVRDYGVGLRPGEEKLVFSRFWRSDPSRVRRSGGTGLGLAISVEDARLHQGRLEAWGEPGEGACFRLTLPMVRGHKVTTSPLPMKPIPQPVLQPVAQPNPQPMPPEYKERQRPREHAEWSG</sequence>
<proteinExistence type="evidence at protein level"/>
<comment type="function">
    <text evidence="7 8">Member of the two-component regulatory system MtrA/MtrB. Probably functions as a membrane-associated protein kinase that phosphorylates MtrA in response to environmental signals. Autophosphorylates and transfers phosphate to MtrA in vitro. Overexpression of MtrA alone decreases bacterial virulence in mouse infection; co-expression of MtrA and MtrB restores normal bacterial growth, suggesting that bacterial growth in macrophages requires an optimal ratio of MtrB to MtrA. Probably plays a role in cell division.</text>
</comment>
<comment type="catalytic activity">
    <reaction>
        <text>ATP + protein L-histidine = ADP + protein N-phospho-L-histidine.</text>
        <dbReference type="EC" id="2.7.13.3"/>
    </reaction>
</comment>
<comment type="cofactor">
    <cofactor evidence="7">
        <name>Mg(2+)</name>
        <dbReference type="ChEBI" id="CHEBI:18420"/>
    </cofactor>
    <cofactor evidence="7">
        <name>Ca(2+)</name>
        <dbReference type="ChEBI" id="CHEBI:29108"/>
    </cofactor>
    <text evidence="7">Autophosphorylates in the presence of Mg(2+) and/or Ca(2+), but only Mg(2+) ions promote phosphotransfer to MtrA.</text>
</comment>
<comment type="activity regulation">
    <text evidence="7">Ca(2+) ions inhibit the phosphotransfer from MtrB to MtrA.</text>
</comment>
<comment type="subunit">
    <text evidence="6 7">Interacts with MrtA. Interacts with LpqB, probably extracytoplasmically via MtrB's sensor domain.</text>
</comment>
<comment type="subcellular location">
    <subcellularLocation>
        <location evidence="6 8">Cell membrane</location>
        <topology evidence="6 8">Multi-pass membrane protein</topology>
    </subcellularLocation>
    <text>Found at the septa or mid-cell, independent of phosphorylation state.</text>
</comment>
<comment type="PTM">
    <text>The C-terminal domain (residues 234-567) autophosphorylates.</text>
</comment>
<comment type="disruption phenotype">
    <text evidence="5">Not essential for growth in liquid culture.</text>
</comment>
<comment type="miscellaneous">
    <text>Was identified as a high-confidence drug target.</text>
</comment>
<feature type="chain" id="PRO_0000074809" description="Sensor histidine kinase MtrB">
    <location>
        <begin position="1"/>
        <end position="567"/>
    </location>
</feature>
<feature type="transmembrane region" description="Helical" evidence="1">
    <location>
        <begin position="42"/>
        <end position="62"/>
    </location>
</feature>
<feature type="transmembrane region" description="Helical" evidence="1">
    <location>
        <begin position="213"/>
        <end position="233"/>
    </location>
</feature>
<feature type="domain" description="HAMP" evidence="2">
    <location>
        <begin position="235"/>
        <end position="287"/>
    </location>
</feature>
<feature type="domain" description="Histidine kinase" evidence="3">
    <location>
        <begin position="302"/>
        <end position="519"/>
    </location>
</feature>
<feature type="region of interest" description="Disordered" evidence="4">
    <location>
        <begin position="1"/>
        <end position="20"/>
    </location>
</feature>
<feature type="region of interest" description="Disordered" evidence="4">
    <location>
        <begin position="529"/>
        <end position="567"/>
    </location>
</feature>
<feature type="compositionally biased region" description="Basic residues" evidence="4">
    <location>
        <begin position="1"/>
        <end position="15"/>
    </location>
</feature>
<feature type="compositionally biased region" description="Pro residues" evidence="4">
    <location>
        <begin position="529"/>
        <end position="551"/>
    </location>
</feature>
<feature type="compositionally biased region" description="Basic and acidic residues" evidence="4">
    <location>
        <begin position="552"/>
        <end position="567"/>
    </location>
</feature>
<feature type="modified residue" description="Phosphohistidine; by autocatalysis" evidence="9">
    <location>
        <position position="305"/>
    </location>
</feature>
<feature type="mutagenesis site" description="Loss of autophosphorylation. Partially complements an M.smegmatis mtrB disruption, cells are still filamentous and bulged but the protein targets to septa." evidence="8">
    <original>H</original>
    <variation>D</variation>
    <variation>Y</variation>
    <location>
        <position position="305"/>
    </location>
</feature>
<feature type="sequence conflict" description="In Ref. 1; AAB07807." evidence="9" ref="1">
    <original>R</original>
    <variation>G</variation>
    <location>
        <position position="308"/>
    </location>
</feature>
<gene>
    <name type="primary">mtrB</name>
    <name type="ordered locus">Rv3245c</name>
    <name type="ORF">MTCY20B11.20c</name>
</gene>